<protein>
    <recommendedName>
        <fullName>Somatotropin-2</fullName>
    </recommendedName>
    <alternativeName>
        <fullName>Growth hormone II</fullName>
    </alternativeName>
    <alternativeName>
        <fullName>Somatotropin II</fullName>
    </alternativeName>
</protein>
<reference key="1">
    <citation type="journal article" date="1993" name="Can. J. Fish. Aquat. Sci.">
        <title>Sequence of sockeye salmon type 1 and 2 growth hormone genes and the relationship of rainbow trout with Atlantic and Pacific salmon.</title>
        <authorList>
            <person name="Devlin R.H."/>
        </authorList>
    </citation>
    <scope>NUCLEOTIDE SEQUENCE [GENOMIC DNA]</scope>
    <source>
        <tissue>Liver</tissue>
    </source>
</reference>
<proteinExistence type="inferred from homology"/>
<gene>
    <name type="primary">gh2</name>
</gene>
<accession>Q91221</accession>
<feature type="signal peptide" evidence="1">
    <location>
        <begin position="1"/>
        <end position="22"/>
    </location>
</feature>
<feature type="chain" id="PRO_0000033039" description="Somatotropin-2">
    <location>
        <begin position="23"/>
        <end position="210"/>
    </location>
</feature>
<feature type="binding site" evidence="1">
    <location>
        <position position="38"/>
    </location>
    <ligand>
        <name>Zn(2+)</name>
        <dbReference type="ChEBI" id="CHEBI:29105"/>
    </ligand>
</feature>
<feature type="binding site" evidence="1">
    <location>
        <position position="192"/>
    </location>
    <ligand>
        <name>Zn(2+)</name>
        <dbReference type="ChEBI" id="CHEBI:29105"/>
    </ligand>
</feature>
<feature type="disulfide bond" evidence="1">
    <location>
        <begin position="71"/>
        <end position="183"/>
    </location>
</feature>
<feature type="disulfide bond" evidence="1">
    <location>
        <begin position="200"/>
        <end position="208"/>
    </location>
</feature>
<sequence>MGQVFLLMPVLLVSCFLSQGAAMENQRLFNIAVNRVQHLHLLAQKMFNDFEGTLLSDERRQLNKIFLLDFCNSDSIVSPIDKQETQKSSVLKLLRISFRLIESWEYPSQTLTISNSLMVRNSNQISEKLSDLKVGINLLIEGSQEGILSLDDNDSQHLPPYGNYYQNLGGDGNVRRNYELLACFKKDMHKVETYLTVAKCRKSLEANCTL</sequence>
<dbReference type="EMBL" id="U14535">
    <property type="protein sequence ID" value="AAA50758.1"/>
    <property type="molecule type" value="Genomic_DNA"/>
</dbReference>
<dbReference type="SMR" id="Q91221"/>
<dbReference type="GO" id="GO:0005615">
    <property type="term" value="C:extracellular space"/>
    <property type="evidence" value="ECO:0007669"/>
    <property type="project" value="InterPro"/>
</dbReference>
<dbReference type="GO" id="GO:0070186">
    <property type="term" value="F:growth hormone activity"/>
    <property type="evidence" value="ECO:0007669"/>
    <property type="project" value="TreeGrafter"/>
</dbReference>
<dbReference type="GO" id="GO:0005131">
    <property type="term" value="F:growth hormone receptor binding"/>
    <property type="evidence" value="ECO:0007669"/>
    <property type="project" value="InterPro"/>
</dbReference>
<dbReference type="GO" id="GO:0046872">
    <property type="term" value="F:metal ion binding"/>
    <property type="evidence" value="ECO:0007669"/>
    <property type="project" value="UniProtKB-KW"/>
</dbReference>
<dbReference type="GO" id="GO:0048513">
    <property type="term" value="P:animal organ development"/>
    <property type="evidence" value="ECO:0007669"/>
    <property type="project" value="TreeGrafter"/>
</dbReference>
<dbReference type="GO" id="GO:0055074">
    <property type="term" value="P:calcium ion homeostasis"/>
    <property type="evidence" value="ECO:0000250"/>
    <property type="project" value="AgBase"/>
</dbReference>
<dbReference type="GO" id="GO:0060396">
    <property type="term" value="P:growth hormone receptor signaling pathway"/>
    <property type="evidence" value="ECO:0007669"/>
    <property type="project" value="TreeGrafter"/>
</dbReference>
<dbReference type="GO" id="GO:0042538">
    <property type="term" value="P:hyperosmotic salinity response"/>
    <property type="evidence" value="ECO:0000250"/>
    <property type="project" value="AgBase"/>
</dbReference>
<dbReference type="GO" id="GO:0010960">
    <property type="term" value="P:magnesium ion homeostasis"/>
    <property type="evidence" value="ECO:0000250"/>
    <property type="project" value="AgBase"/>
</dbReference>
<dbReference type="GO" id="GO:0045927">
    <property type="term" value="P:positive regulation of growth"/>
    <property type="evidence" value="ECO:0007669"/>
    <property type="project" value="TreeGrafter"/>
</dbReference>
<dbReference type="GO" id="GO:0050766">
    <property type="term" value="P:positive regulation of phagocytosis"/>
    <property type="evidence" value="ECO:0000250"/>
    <property type="project" value="AgBase"/>
</dbReference>
<dbReference type="GO" id="GO:0046427">
    <property type="term" value="P:positive regulation of receptor signaling pathway via JAK-STAT"/>
    <property type="evidence" value="ECO:0007669"/>
    <property type="project" value="TreeGrafter"/>
</dbReference>
<dbReference type="GO" id="GO:0032930">
    <property type="term" value="P:positive regulation of superoxide anion generation"/>
    <property type="evidence" value="ECO:0000250"/>
    <property type="project" value="AgBase"/>
</dbReference>
<dbReference type="GO" id="GO:0002637">
    <property type="term" value="P:regulation of immunoglobulin production"/>
    <property type="evidence" value="ECO:0000250"/>
    <property type="project" value="AgBase"/>
</dbReference>
<dbReference type="GO" id="GO:0031667">
    <property type="term" value="P:response to nutrient levels"/>
    <property type="evidence" value="ECO:0007669"/>
    <property type="project" value="TreeGrafter"/>
</dbReference>
<dbReference type="GO" id="GO:0055078">
    <property type="term" value="P:sodium ion homeostasis"/>
    <property type="evidence" value="ECO:0000250"/>
    <property type="project" value="AgBase"/>
</dbReference>
<dbReference type="CDD" id="cd10285">
    <property type="entry name" value="somatotropin_like"/>
    <property type="match status" value="1"/>
</dbReference>
<dbReference type="FunFam" id="1.20.1250.10:FF:000009">
    <property type="entry name" value="Growth hormone"/>
    <property type="match status" value="1"/>
</dbReference>
<dbReference type="Gene3D" id="1.20.1250.10">
    <property type="match status" value="1"/>
</dbReference>
<dbReference type="InterPro" id="IPR009079">
    <property type="entry name" value="4_helix_cytokine-like_core"/>
</dbReference>
<dbReference type="InterPro" id="IPR034975">
    <property type="entry name" value="Somatotropin"/>
</dbReference>
<dbReference type="InterPro" id="IPR001400">
    <property type="entry name" value="Somatotropin/Prolactin"/>
</dbReference>
<dbReference type="InterPro" id="IPR018116">
    <property type="entry name" value="Somatotropin_CS"/>
</dbReference>
<dbReference type="PANTHER" id="PTHR11417:SF2">
    <property type="entry name" value="SOMATOTROPIN"/>
    <property type="match status" value="1"/>
</dbReference>
<dbReference type="PANTHER" id="PTHR11417">
    <property type="entry name" value="SOMATOTROPIN,PROLACTIN"/>
    <property type="match status" value="1"/>
</dbReference>
<dbReference type="Pfam" id="PF00103">
    <property type="entry name" value="Hormone_1"/>
    <property type="match status" value="1"/>
</dbReference>
<dbReference type="PRINTS" id="PR00836">
    <property type="entry name" value="SOMATOTROPIN"/>
</dbReference>
<dbReference type="SUPFAM" id="SSF47266">
    <property type="entry name" value="4-helical cytokines"/>
    <property type="match status" value="1"/>
</dbReference>
<dbReference type="PROSITE" id="PS00266">
    <property type="entry name" value="SOMATOTROPIN_1"/>
    <property type="match status" value="1"/>
</dbReference>
<dbReference type="PROSITE" id="PS00338">
    <property type="entry name" value="SOMATOTROPIN_2"/>
    <property type="match status" value="1"/>
</dbReference>
<name>SOMA2_ONCNE</name>
<organism>
    <name type="scientific">Oncorhynchus nerka</name>
    <name type="common">Sockeye salmon</name>
    <name type="synonym">Salmo nerka</name>
    <dbReference type="NCBI Taxonomy" id="8023"/>
    <lineage>
        <taxon>Eukaryota</taxon>
        <taxon>Metazoa</taxon>
        <taxon>Chordata</taxon>
        <taxon>Craniata</taxon>
        <taxon>Vertebrata</taxon>
        <taxon>Euteleostomi</taxon>
        <taxon>Actinopterygii</taxon>
        <taxon>Neopterygii</taxon>
        <taxon>Teleostei</taxon>
        <taxon>Protacanthopterygii</taxon>
        <taxon>Salmoniformes</taxon>
        <taxon>Salmonidae</taxon>
        <taxon>Salmoninae</taxon>
        <taxon>Oncorhynchus</taxon>
    </lineage>
</organism>
<comment type="function">
    <text>Growth hormone plays an important role in growth control and is involved in the regulation of several anabolic processes. Implicated as an osmoregulatory substance important for seawater adaptation.</text>
</comment>
<comment type="subcellular location">
    <subcellularLocation>
        <location>Secreted</location>
    </subcellularLocation>
</comment>
<comment type="similarity">
    <text evidence="2">Belongs to the somatotropin/prolactin family.</text>
</comment>
<keyword id="KW-1015">Disulfide bond</keyword>
<keyword id="KW-0372">Hormone</keyword>
<keyword id="KW-0479">Metal-binding</keyword>
<keyword id="KW-0964">Secreted</keyword>
<keyword id="KW-0732">Signal</keyword>
<keyword id="KW-0862">Zinc</keyword>
<evidence type="ECO:0000250" key="1"/>
<evidence type="ECO:0000305" key="2"/>